<accession>A4SS99</accession>
<gene>
    <name evidence="1" type="primary">alaS</name>
    <name type="ordered locus">ASA_3811</name>
</gene>
<comment type="function">
    <text evidence="1">Catalyzes the attachment of alanine to tRNA(Ala) in a two-step reaction: alanine is first activated by ATP to form Ala-AMP and then transferred to the acceptor end of tRNA(Ala). Also edits incorrectly charged Ser-tRNA(Ala) and Gly-tRNA(Ala) via its editing domain.</text>
</comment>
<comment type="catalytic activity">
    <reaction evidence="1">
        <text>tRNA(Ala) + L-alanine + ATP = L-alanyl-tRNA(Ala) + AMP + diphosphate</text>
        <dbReference type="Rhea" id="RHEA:12540"/>
        <dbReference type="Rhea" id="RHEA-COMP:9657"/>
        <dbReference type="Rhea" id="RHEA-COMP:9923"/>
        <dbReference type="ChEBI" id="CHEBI:30616"/>
        <dbReference type="ChEBI" id="CHEBI:33019"/>
        <dbReference type="ChEBI" id="CHEBI:57972"/>
        <dbReference type="ChEBI" id="CHEBI:78442"/>
        <dbReference type="ChEBI" id="CHEBI:78497"/>
        <dbReference type="ChEBI" id="CHEBI:456215"/>
        <dbReference type="EC" id="6.1.1.7"/>
    </reaction>
</comment>
<comment type="cofactor">
    <cofactor evidence="1">
        <name>Zn(2+)</name>
        <dbReference type="ChEBI" id="CHEBI:29105"/>
    </cofactor>
    <text evidence="1">Binds 1 zinc ion per subunit.</text>
</comment>
<comment type="subcellular location">
    <subcellularLocation>
        <location evidence="1">Cytoplasm</location>
    </subcellularLocation>
</comment>
<comment type="domain">
    <text evidence="1">Consists of three domains; the N-terminal catalytic domain, the editing domain and the C-terminal C-Ala domain. The editing domain removes incorrectly charged amino acids, while the C-Ala domain, along with tRNA(Ala), serves as a bridge to cooperatively bring together the editing and aminoacylation centers thus stimulating deacylation of misacylated tRNAs.</text>
</comment>
<comment type="similarity">
    <text evidence="1">Belongs to the class-II aminoacyl-tRNA synthetase family.</text>
</comment>
<organism>
    <name type="scientific">Aeromonas salmonicida (strain A449)</name>
    <dbReference type="NCBI Taxonomy" id="382245"/>
    <lineage>
        <taxon>Bacteria</taxon>
        <taxon>Pseudomonadati</taxon>
        <taxon>Pseudomonadota</taxon>
        <taxon>Gammaproteobacteria</taxon>
        <taxon>Aeromonadales</taxon>
        <taxon>Aeromonadaceae</taxon>
        <taxon>Aeromonas</taxon>
    </lineage>
</organism>
<keyword id="KW-0030">Aminoacyl-tRNA synthetase</keyword>
<keyword id="KW-0067">ATP-binding</keyword>
<keyword id="KW-0963">Cytoplasm</keyword>
<keyword id="KW-0436">Ligase</keyword>
<keyword id="KW-0479">Metal-binding</keyword>
<keyword id="KW-0547">Nucleotide-binding</keyword>
<keyword id="KW-0648">Protein biosynthesis</keyword>
<keyword id="KW-0694">RNA-binding</keyword>
<keyword id="KW-0820">tRNA-binding</keyword>
<keyword id="KW-0862">Zinc</keyword>
<protein>
    <recommendedName>
        <fullName evidence="1">Alanine--tRNA ligase</fullName>
        <ecNumber evidence="1">6.1.1.7</ecNumber>
    </recommendedName>
    <alternativeName>
        <fullName evidence="1">Alanyl-tRNA synthetase</fullName>
        <shortName evidence="1">AlaRS</shortName>
    </alternativeName>
</protein>
<evidence type="ECO:0000255" key="1">
    <source>
        <dbReference type="HAMAP-Rule" id="MF_00036"/>
    </source>
</evidence>
<feature type="chain" id="PRO_0000347481" description="Alanine--tRNA ligase">
    <location>
        <begin position="1"/>
        <end position="874"/>
    </location>
</feature>
<feature type="binding site" evidence="1">
    <location>
        <position position="563"/>
    </location>
    <ligand>
        <name>Zn(2+)</name>
        <dbReference type="ChEBI" id="CHEBI:29105"/>
    </ligand>
</feature>
<feature type="binding site" evidence="1">
    <location>
        <position position="567"/>
    </location>
    <ligand>
        <name>Zn(2+)</name>
        <dbReference type="ChEBI" id="CHEBI:29105"/>
    </ligand>
</feature>
<feature type="binding site" evidence="1">
    <location>
        <position position="665"/>
    </location>
    <ligand>
        <name>Zn(2+)</name>
        <dbReference type="ChEBI" id="CHEBI:29105"/>
    </ligand>
</feature>
<feature type="binding site" evidence="1">
    <location>
        <position position="669"/>
    </location>
    <ligand>
        <name>Zn(2+)</name>
        <dbReference type="ChEBI" id="CHEBI:29105"/>
    </ligand>
</feature>
<dbReference type="EC" id="6.1.1.7" evidence="1"/>
<dbReference type="EMBL" id="CP000644">
    <property type="protein sequence ID" value="ABO91771.1"/>
    <property type="molecule type" value="Genomic_DNA"/>
</dbReference>
<dbReference type="RefSeq" id="WP_005315766.1">
    <property type="nucleotide sequence ID" value="NC_009348.1"/>
</dbReference>
<dbReference type="SMR" id="A4SS99"/>
<dbReference type="STRING" id="29491.GCA_000820065_04194"/>
<dbReference type="KEGG" id="asa:ASA_3811"/>
<dbReference type="PATRIC" id="fig|382245.13.peg.3787"/>
<dbReference type="eggNOG" id="COG0013">
    <property type="taxonomic scope" value="Bacteria"/>
</dbReference>
<dbReference type="HOGENOM" id="CLU_004485_1_1_6"/>
<dbReference type="Proteomes" id="UP000000225">
    <property type="component" value="Chromosome"/>
</dbReference>
<dbReference type="GO" id="GO:0005829">
    <property type="term" value="C:cytosol"/>
    <property type="evidence" value="ECO:0007669"/>
    <property type="project" value="TreeGrafter"/>
</dbReference>
<dbReference type="GO" id="GO:0004813">
    <property type="term" value="F:alanine-tRNA ligase activity"/>
    <property type="evidence" value="ECO:0007669"/>
    <property type="project" value="UniProtKB-UniRule"/>
</dbReference>
<dbReference type="GO" id="GO:0002161">
    <property type="term" value="F:aminoacyl-tRNA deacylase activity"/>
    <property type="evidence" value="ECO:0007669"/>
    <property type="project" value="TreeGrafter"/>
</dbReference>
<dbReference type="GO" id="GO:0005524">
    <property type="term" value="F:ATP binding"/>
    <property type="evidence" value="ECO:0007669"/>
    <property type="project" value="UniProtKB-UniRule"/>
</dbReference>
<dbReference type="GO" id="GO:0000049">
    <property type="term" value="F:tRNA binding"/>
    <property type="evidence" value="ECO:0007669"/>
    <property type="project" value="UniProtKB-KW"/>
</dbReference>
<dbReference type="GO" id="GO:0008270">
    <property type="term" value="F:zinc ion binding"/>
    <property type="evidence" value="ECO:0007669"/>
    <property type="project" value="UniProtKB-UniRule"/>
</dbReference>
<dbReference type="GO" id="GO:0006419">
    <property type="term" value="P:alanyl-tRNA aminoacylation"/>
    <property type="evidence" value="ECO:0007669"/>
    <property type="project" value="UniProtKB-UniRule"/>
</dbReference>
<dbReference type="GO" id="GO:0045892">
    <property type="term" value="P:negative regulation of DNA-templated transcription"/>
    <property type="evidence" value="ECO:0007669"/>
    <property type="project" value="TreeGrafter"/>
</dbReference>
<dbReference type="CDD" id="cd00673">
    <property type="entry name" value="AlaRS_core"/>
    <property type="match status" value="1"/>
</dbReference>
<dbReference type="FunFam" id="2.40.30.130:FF:000001">
    <property type="entry name" value="Alanine--tRNA ligase"/>
    <property type="match status" value="1"/>
</dbReference>
<dbReference type="FunFam" id="3.10.310.40:FF:000001">
    <property type="entry name" value="Alanine--tRNA ligase"/>
    <property type="match status" value="1"/>
</dbReference>
<dbReference type="FunFam" id="3.30.54.20:FF:000001">
    <property type="entry name" value="Alanine--tRNA ligase"/>
    <property type="match status" value="1"/>
</dbReference>
<dbReference type="FunFam" id="3.30.930.10:FF:000004">
    <property type="entry name" value="Alanine--tRNA ligase"/>
    <property type="match status" value="1"/>
</dbReference>
<dbReference type="FunFam" id="3.30.980.10:FF:000004">
    <property type="entry name" value="Alanine--tRNA ligase, cytoplasmic"/>
    <property type="match status" value="1"/>
</dbReference>
<dbReference type="Gene3D" id="2.40.30.130">
    <property type="match status" value="1"/>
</dbReference>
<dbReference type="Gene3D" id="3.10.310.40">
    <property type="match status" value="1"/>
</dbReference>
<dbReference type="Gene3D" id="3.30.54.20">
    <property type="match status" value="1"/>
</dbReference>
<dbReference type="Gene3D" id="6.10.250.550">
    <property type="match status" value="1"/>
</dbReference>
<dbReference type="Gene3D" id="3.30.930.10">
    <property type="entry name" value="Bira Bifunctional Protein, Domain 2"/>
    <property type="match status" value="1"/>
</dbReference>
<dbReference type="Gene3D" id="3.30.980.10">
    <property type="entry name" value="Threonyl-trna Synthetase, Chain A, domain 2"/>
    <property type="match status" value="1"/>
</dbReference>
<dbReference type="HAMAP" id="MF_00036_B">
    <property type="entry name" value="Ala_tRNA_synth_B"/>
    <property type="match status" value="1"/>
</dbReference>
<dbReference type="InterPro" id="IPR045864">
    <property type="entry name" value="aa-tRNA-synth_II/BPL/LPL"/>
</dbReference>
<dbReference type="InterPro" id="IPR002318">
    <property type="entry name" value="Ala-tRNA-lgiase_IIc"/>
</dbReference>
<dbReference type="InterPro" id="IPR018162">
    <property type="entry name" value="Ala-tRNA-ligase_IIc_anticod-bd"/>
</dbReference>
<dbReference type="InterPro" id="IPR018165">
    <property type="entry name" value="Ala-tRNA-synth_IIc_core"/>
</dbReference>
<dbReference type="InterPro" id="IPR018164">
    <property type="entry name" value="Ala-tRNA-synth_IIc_N"/>
</dbReference>
<dbReference type="InterPro" id="IPR050058">
    <property type="entry name" value="Ala-tRNA_ligase"/>
</dbReference>
<dbReference type="InterPro" id="IPR023033">
    <property type="entry name" value="Ala_tRNA_ligase_euk/bac"/>
</dbReference>
<dbReference type="InterPro" id="IPR003156">
    <property type="entry name" value="DHHA1_dom"/>
</dbReference>
<dbReference type="InterPro" id="IPR018163">
    <property type="entry name" value="Thr/Ala-tRNA-synth_IIc_edit"/>
</dbReference>
<dbReference type="InterPro" id="IPR009000">
    <property type="entry name" value="Transl_B-barrel_sf"/>
</dbReference>
<dbReference type="InterPro" id="IPR012947">
    <property type="entry name" value="tRNA_SAD"/>
</dbReference>
<dbReference type="NCBIfam" id="TIGR00344">
    <property type="entry name" value="alaS"/>
    <property type="match status" value="1"/>
</dbReference>
<dbReference type="PANTHER" id="PTHR11777:SF9">
    <property type="entry name" value="ALANINE--TRNA LIGASE, CYTOPLASMIC"/>
    <property type="match status" value="1"/>
</dbReference>
<dbReference type="PANTHER" id="PTHR11777">
    <property type="entry name" value="ALANYL-TRNA SYNTHETASE"/>
    <property type="match status" value="1"/>
</dbReference>
<dbReference type="Pfam" id="PF02272">
    <property type="entry name" value="DHHA1"/>
    <property type="match status" value="1"/>
</dbReference>
<dbReference type="Pfam" id="PF01411">
    <property type="entry name" value="tRNA-synt_2c"/>
    <property type="match status" value="1"/>
</dbReference>
<dbReference type="Pfam" id="PF07973">
    <property type="entry name" value="tRNA_SAD"/>
    <property type="match status" value="1"/>
</dbReference>
<dbReference type="PRINTS" id="PR00980">
    <property type="entry name" value="TRNASYNTHALA"/>
</dbReference>
<dbReference type="SMART" id="SM00863">
    <property type="entry name" value="tRNA_SAD"/>
    <property type="match status" value="1"/>
</dbReference>
<dbReference type="SUPFAM" id="SSF55681">
    <property type="entry name" value="Class II aaRS and biotin synthetases"/>
    <property type="match status" value="1"/>
</dbReference>
<dbReference type="SUPFAM" id="SSF101353">
    <property type="entry name" value="Putative anticodon-binding domain of alanyl-tRNA synthetase (AlaRS)"/>
    <property type="match status" value="1"/>
</dbReference>
<dbReference type="SUPFAM" id="SSF55186">
    <property type="entry name" value="ThrRS/AlaRS common domain"/>
    <property type="match status" value="1"/>
</dbReference>
<dbReference type="SUPFAM" id="SSF50447">
    <property type="entry name" value="Translation proteins"/>
    <property type="match status" value="1"/>
</dbReference>
<dbReference type="PROSITE" id="PS50860">
    <property type="entry name" value="AA_TRNA_LIGASE_II_ALA"/>
    <property type="match status" value="1"/>
</dbReference>
<reference key="1">
    <citation type="journal article" date="2008" name="BMC Genomics">
        <title>The genome of Aeromonas salmonicida subsp. salmonicida A449: insights into the evolution of a fish pathogen.</title>
        <authorList>
            <person name="Reith M.E."/>
            <person name="Singh R.K."/>
            <person name="Curtis B."/>
            <person name="Boyd J.M."/>
            <person name="Bouevitch A."/>
            <person name="Kimball J."/>
            <person name="Munholland J."/>
            <person name="Murphy C."/>
            <person name="Sarty D."/>
            <person name="Williams J."/>
            <person name="Nash J.H."/>
            <person name="Johnson S.C."/>
            <person name="Brown L.L."/>
        </authorList>
    </citation>
    <scope>NUCLEOTIDE SEQUENCE [LARGE SCALE GENOMIC DNA]</scope>
    <source>
        <strain>A449</strain>
    </source>
</reference>
<sequence length="874" mass="95779">MYMSTSEIRAAFLEYFRSQGHQVVSSSSLVPHNDPTLLFTNAGMNQFKDVFLGADKRAYNRATTSQRCVRAGGKHNDLENVGYTARHHTFFEMLGNFSFGDYFKQDAIRFAWEFLTGTLKLPKERLLVTVYETDDEAFNIWANEVGVPVERIVRIGDNKGAAFASDNFWQMSDTGPCGPCTEIFYDHGDHIWGGPPGSPEEDGDRFIEIWNVVFMQFNRQADGTMEPLPRPSVDTGMGLERISAIMQGVHSNYEIDIFQALIKKAAEIVGTTDLSNQSLRVIADHIRSCAFLIADGVMPSNEGRGYVLRRIIRRAVRHGRKLGATDVFFYKLAAELAVQMKDVGAELIAQLPLVKRVLRIEEEQFVRTLDRGLLLLEDVLANLGDAKVIPGEVVFKLYDTYGFPADLTADVVREREIGIDEEGFNAEMEKQRARAKEASSFGVNYNEVLKLDFETPFTGYKQLSQKTSVVGIYKDGVEVNGLIAGEEAVVVLAETPFYAESGGQVGDCGVLKVDDGIFAVTDTQKAGKAIIHKGYLELGTLEKGALVEAVVDGERRQAVALNHSVTHLLHAALRQALGDHVTQKGSLVGAERMRFDFSHFEGLTMATIRRVEELVNAQIRANHDIATQVMDLEAAKSAGAMALFGEKYEDDVRVVRMGDYSTELCGGTHAKRTGDIGFFKIIAESGIAAGVRRIEAVTGKGAIDFMHQMGEQIEEAAALVKGDQFSIADKVRQILDKSKMMERELEQLKAKLAAQAGSDLLSQVIEINGQKVLIAALEGADPKSLRGMLDELKNRMKSGVVLLATSSDDKVNLIAGVTSDLTGKVKAGELVNLVAQQVGGKGGGRPDMAQAGGTQPEAVPAALQSVHSWLEERL</sequence>
<proteinExistence type="inferred from homology"/>
<name>SYA_AERS4</name>